<feature type="signal peptide" evidence="3">
    <location>
        <begin position="1"/>
        <end position="20"/>
    </location>
</feature>
<feature type="chain" id="PRO_5004263468" description="A disintegrin and metalloproteinase with thrombospondin motifs 1" evidence="3">
    <location>
        <begin position="21"/>
        <end position="1007"/>
    </location>
</feature>
<feature type="domain" description="Peptidase M12B" evidence="5">
    <location>
        <begin position="184"/>
        <end position="370"/>
    </location>
</feature>
<feature type="domain" description="TSP type-1 1" evidence="4">
    <location>
        <begin position="482"/>
        <end position="537"/>
    </location>
</feature>
<feature type="domain" description="TSP type-1 2" evidence="4">
    <location>
        <begin position="833"/>
        <end position="899"/>
    </location>
</feature>
<feature type="domain" description="TSP type-1 3" evidence="4">
    <location>
        <begin position="900"/>
        <end position="952"/>
    </location>
</feature>
<feature type="short sequence motif" description="Metal-binding" evidence="12">
    <location>
        <begin position="322"/>
        <end position="333"/>
    </location>
</feature>
<feature type="active site" evidence="5">
    <location>
        <position position="323"/>
    </location>
</feature>
<feature type="binding site" evidence="5">
    <location>
        <position position="322"/>
    </location>
    <ligand>
        <name>Zn(2+)</name>
        <dbReference type="ChEBI" id="CHEBI:29105"/>
        <note>catalytic</note>
    </ligand>
</feature>
<feature type="binding site" evidence="5">
    <location>
        <position position="326"/>
    </location>
    <ligand>
        <name>Zn(2+)</name>
        <dbReference type="ChEBI" id="CHEBI:29105"/>
        <note>catalytic</note>
    </ligand>
</feature>
<feature type="binding site" evidence="5">
    <location>
        <position position="332"/>
    </location>
    <ligand>
        <name>Zn(2+)</name>
        <dbReference type="ChEBI" id="CHEBI:29105"/>
        <note>catalytic</note>
    </ligand>
</feature>
<feature type="glycosylation site" description="N-linked (GlcNAc...) asparagine" evidence="6">
    <location>
        <position position="130"/>
    </location>
</feature>
<feature type="glycosylation site" description="N-linked (GlcNAc...) asparagine" evidence="6">
    <location>
        <position position="228"/>
    </location>
</feature>
<feature type="glycosylation site" description="N-linked (GlcNAc...) asparagine" evidence="6">
    <location>
        <position position="561"/>
    </location>
</feature>
<feature type="glycosylation site" description="N-linked (GlcNAc...) asparagine" evidence="6">
    <location>
        <position position="610"/>
    </location>
</feature>
<feature type="glycosylation site" description="N-linked (GlcNAc...) asparagine" evidence="6">
    <location>
        <position position="626"/>
    </location>
</feature>
<feature type="glycosylation site" description="N-linked (GlcNAc...) asparagine" evidence="6">
    <location>
        <position position="737"/>
    </location>
</feature>
<feature type="glycosylation site" description="N-linked (GlcNAc...) asparagine" evidence="6">
    <location>
        <position position="777"/>
    </location>
</feature>
<feature type="glycosylation site" description="N-linked (GlcNAc...) asparagine" evidence="6">
    <location>
        <position position="865"/>
    </location>
</feature>
<feature type="disulfide bond" evidence="5">
    <location>
        <begin position="338"/>
        <end position="364"/>
    </location>
</feature>
<feature type="disulfide bond" evidence="4">
    <location>
        <begin position="494"/>
        <end position="530"/>
    </location>
</feature>
<feature type="disulfide bond" evidence="4">
    <location>
        <begin position="498"/>
        <end position="536"/>
    </location>
</feature>
<feature type="disulfide bond" evidence="4">
    <location>
        <begin position="509"/>
        <end position="520"/>
    </location>
</feature>
<feature type="disulfide bond" evidence="4">
    <location>
        <begin position="912"/>
        <end position="946"/>
    </location>
</feature>
<feature type="disulfide bond" evidence="4">
    <location>
        <begin position="916"/>
        <end position="951"/>
    </location>
</feature>
<feature type="disulfide bond" evidence="4">
    <location>
        <begin position="927"/>
        <end position="935"/>
    </location>
</feature>
<comment type="function">
    <text evidence="12 13">Involved in larval molting and metamorphosis. May degrade extracellular matrix (ECM) and basement membrane (BM) during the development of organs to allow degeneration and remodeling of tissues.</text>
</comment>
<comment type="cofactor">
    <cofactor evidence="1">
        <name>Zn(2+)</name>
        <dbReference type="ChEBI" id="CHEBI:29105"/>
    </cofactor>
    <text evidence="1">Binds 1 zinc ion per subunit.</text>
</comment>
<comment type="subcellular location">
    <subcellularLocation>
        <location evidence="2">Secreted</location>
        <location evidence="2">Extracellular space</location>
        <location evidence="2">Extracellular matrix</location>
    </subcellularLocation>
</comment>
<comment type="developmental stage">
    <text evidence="7 8">Strongly expressed in hemocytes and midgut, and at a lower level in epidermis, wing disks, ovaries, silk gland and fat body, on day 2 of the wandering stage (W2) larvae (PubMed:15898116). In wing disks, expression increases from W2, showing a small peak on day 3 of the wandering stage (W3). In wing tissues, expression increases after pupation, showing a high peak on day 3 of the pupal stage (P3). In fat body, expression peaks at W2 and on day 1 of the pupal stage (P1) through P3. In midgut, highly expressed around pupation from W3 to P1. In silk glands, expression shows a high broad peak at W3 and the highest expression on the day of pupation (P0), maintaining a low level after P1. In hemocytes, expression peaks broadly at W2 and W3. The expression level is the highest in silk glands of all the organs examined (PubMed:28943345).</text>
</comment>
<comment type="induction">
    <text evidence="7 8">Expression is strongly induced in hemocytes during pupal ecdysis, and at a lower level during 4th ecdysis and pupal stage (PubMed:15898116). Induced by 20-hydroxyecdysone in a concentration-dependent manner in the cultured wing imaginal disks, but not in fat bodies, of day 5 fifth larval instar (PubMed:28943345).</text>
</comment>
<dbReference type="EC" id="3.4.24.-" evidence="11"/>
<dbReference type="EMBL" id="AB194270">
    <property type="protein sequence ID" value="BAD69559.2"/>
    <property type="molecule type" value="mRNA"/>
</dbReference>
<dbReference type="EMBL" id="BHWX01000009">
    <property type="status" value="NOT_ANNOTATED_CDS"/>
    <property type="molecule type" value="Genomic_DNA"/>
</dbReference>
<dbReference type="RefSeq" id="NP_001036981.1">
    <property type="nucleotide sequence ID" value="NM_001043516.1"/>
</dbReference>
<dbReference type="SMR" id="Q5W7F4"/>
<dbReference type="EnsemblMetazoa" id="NM_001043516.1">
    <property type="protein sequence ID" value="NP_001036981.1"/>
    <property type="gene ID" value="GeneID_692529"/>
</dbReference>
<dbReference type="GeneID" id="692529"/>
<dbReference type="KEGG" id="bmor:692529"/>
<dbReference type="CTD" id="692529"/>
<dbReference type="HOGENOM" id="CLU_792885_0_0_1"/>
<dbReference type="OrthoDB" id="651767at7088"/>
<dbReference type="Proteomes" id="UP000005204">
    <property type="component" value="Unassembled WGS sequence"/>
</dbReference>
<dbReference type="GO" id="GO:0031012">
    <property type="term" value="C:extracellular matrix"/>
    <property type="evidence" value="ECO:0000250"/>
    <property type="project" value="UniProtKB"/>
</dbReference>
<dbReference type="GO" id="GO:0005576">
    <property type="term" value="C:extracellular region"/>
    <property type="evidence" value="ECO:0007669"/>
    <property type="project" value="UniProtKB-KW"/>
</dbReference>
<dbReference type="GO" id="GO:0004222">
    <property type="term" value="F:metalloendopeptidase activity"/>
    <property type="evidence" value="ECO:0007669"/>
    <property type="project" value="InterPro"/>
</dbReference>
<dbReference type="GO" id="GO:0008270">
    <property type="term" value="F:zinc ion binding"/>
    <property type="evidence" value="ECO:0000250"/>
    <property type="project" value="UniProtKB"/>
</dbReference>
<dbReference type="GO" id="GO:0030198">
    <property type="term" value="P:extracellular matrix organization"/>
    <property type="evidence" value="ECO:0007669"/>
    <property type="project" value="TreeGrafter"/>
</dbReference>
<dbReference type="GO" id="GO:0002168">
    <property type="term" value="P:instar larval development"/>
    <property type="evidence" value="ECO:0000270"/>
    <property type="project" value="UniProtKB"/>
</dbReference>
<dbReference type="GO" id="GO:0007552">
    <property type="term" value="P:metamorphosis"/>
    <property type="evidence" value="ECO:0000270"/>
    <property type="project" value="UniProtKB"/>
</dbReference>
<dbReference type="GO" id="GO:0022404">
    <property type="term" value="P:molting cycle process"/>
    <property type="evidence" value="ECO:0000270"/>
    <property type="project" value="UniProtKB"/>
</dbReference>
<dbReference type="GO" id="GO:0006508">
    <property type="term" value="P:proteolysis"/>
    <property type="evidence" value="ECO:0007669"/>
    <property type="project" value="UniProtKB-KW"/>
</dbReference>
<dbReference type="GO" id="GO:0035074">
    <property type="term" value="P:pupation"/>
    <property type="evidence" value="ECO:0000270"/>
    <property type="project" value="UniProtKB"/>
</dbReference>
<dbReference type="CDD" id="cd04273">
    <property type="entry name" value="ZnMc_ADAMTS_like"/>
    <property type="match status" value="1"/>
</dbReference>
<dbReference type="Gene3D" id="3.40.1620.60">
    <property type="match status" value="1"/>
</dbReference>
<dbReference type="Gene3D" id="3.40.390.10">
    <property type="entry name" value="Collagenase (Catalytic Domain)"/>
    <property type="match status" value="1"/>
</dbReference>
<dbReference type="Gene3D" id="2.20.100.10">
    <property type="entry name" value="Thrombospondin type-1 (TSP1) repeat"/>
    <property type="match status" value="4"/>
</dbReference>
<dbReference type="InterPro" id="IPR006586">
    <property type="entry name" value="ADAM_Cys-rich"/>
</dbReference>
<dbReference type="InterPro" id="IPR050439">
    <property type="entry name" value="ADAMTS_ADAMTS-like"/>
</dbReference>
<dbReference type="InterPro" id="IPR041645">
    <property type="entry name" value="ADAMTS_CR_2"/>
</dbReference>
<dbReference type="InterPro" id="IPR024079">
    <property type="entry name" value="MetalloPept_cat_dom_sf"/>
</dbReference>
<dbReference type="InterPro" id="IPR001590">
    <property type="entry name" value="Peptidase_M12B"/>
</dbReference>
<dbReference type="InterPro" id="IPR000884">
    <property type="entry name" value="TSP1_rpt"/>
</dbReference>
<dbReference type="InterPro" id="IPR036383">
    <property type="entry name" value="TSP1_rpt_sf"/>
</dbReference>
<dbReference type="PANTHER" id="PTHR13723:SF304">
    <property type="entry name" value="A DISINTEGRIN AND METALLOPROTEINASE WITH THROMBOSPONDIN MOTIFS 2-LIKE PROTEIN"/>
    <property type="match status" value="1"/>
</dbReference>
<dbReference type="PANTHER" id="PTHR13723">
    <property type="entry name" value="ADAMTS A DISINTEGRIN AND METALLOPROTEASE WITH THROMBOSPONDIN MOTIFS PROTEASE"/>
    <property type="match status" value="1"/>
</dbReference>
<dbReference type="Pfam" id="PF17771">
    <property type="entry name" value="ADAMTS_CR_2"/>
    <property type="match status" value="1"/>
</dbReference>
<dbReference type="Pfam" id="PF01421">
    <property type="entry name" value="Reprolysin"/>
    <property type="match status" value="1"/>
</dbReference>
<dbReference type="Pfam" id="PF19030">
    <property type="entry name" value="TSP1_ADAMTS"/>
    <property type="match status" value="1"/>
</dbReference>
<dbReference type="Pfam" id="PF00090">
    <property type="entry name" value="TSP_1"/>
    <property type="match status" value="1"/>
</dbReference>
<dbReference type="SMART" id="SM00608">
    <property type="entry name" value="ACR"/>
    <property type="match status" value="1"/>
</dbReference>
<dbReference type="SMART" id="SM00209">
    <property type="entry name" value="TSP1"/>
    <property type="match status" value="4"/>
</dbReference>
<dbReference type="SUPFAM" id="SSF55486">
    <property type="entry name" value="Metalloproteases ('zincins'), catalytic domain"/>
    <property type="match status" value="1"/>
</dbReference>
<dbReference type="SUPFAM" id="SSF82895">
    <property type="entry name" value="TSP-1 type 1 repeat"/>
    <property type="match status" value="3"/>
</dbReference>
<dbReference type="PROSITE" id="PS50215">
    <property type="entry name" value="ADAM_MEPRO"/>
    <property type="match status" value="1"/>
</dbReference>
<dbReference type="PROSITE" id="PS50092">
    <property type="entry name" value="TSP1"/>
    <property type="match status" value="3"/>
</dbReference>
<dbReference type="PROSITE" id="PS00142">
    <property type="entry name" value="ZINC_PROTEASE"/>
    <property type="match status" value="1"/>
</dbReference>
<proteinExistence type="evidence at transcript level"/>
<gene>
    <name evidence="9 10" type="primary">ADAMTS-1</name>
    <name evidence="15" type="synonym">692529</name>
</gene>
<reference evidence="14" key="1">
    <citation type="journal article" date="2005" name="Arch. Insect Biochem. Physiol.">
        <title>Characteristics of two genes encoding proteins with an ADAM-type metalloprotease domain, which are induced during the molting periods in Bombyx mori.</title>
        <authorList>
            <person name="Ote M."/>
            <person name="Mita K."/>
            <person name="Kawasaki H."/>
            <person name="Kobayashi M."/>
            <person name="Shimada T."/>
        </authorList>
    </citation>
    <scope>NUCLEOTIDE SEQUENCE [MRNA]</scope>
    <scope>FUNCTION</scope>
    <scope>DEVELOPMENTAL STAGE</scope>
    <scope>INDUCTION</scope>
    <scope>MOTIF</scope>
    <source>
        <tissue evidence="9">Wing imaginal disk</tissue>
    </source>
</reference>
<reference evidence="16" key="2">
    <citation type="journal article" date="2008" name="Insect Biochem. Mol. Biol.">
        <title>The genome of a lepidopteran model insect, the silkworm Bombyx mori.</title>
        <authorList>
            <consortium name="International Silkworm Genome Consortium"/>
        </authorList>
    </citation>
    <scope>NUCLEOTIDE SEQUENCE [LARGE SCALE GENOMIC DNA]</scope>
    <source>
        <strain evidence="16">p50T</strain>
    </source>
</reference>
<reference key="3">
    <citation type="journal article" date="2018" name="Gene">
        <title>Expression of matrix metalloproteinase genes during basement membrane degradation in the metamorphosis of Bombyx mori.</title>
        <authorList>
            <person name="Kawasaki H."/>
            <person name="Manickam A."/>
            <person name="Shahin R."/>
            <person name="Ote M."/>
            <person name="Iwanaga M."/>
        </authorList>
    </citation>
    <scope>FUNCTION</scope>
    <scope>DEVELOPMENTAL STAGE</scope>
    <scope>INDUCTION</scope>
</reference>
<organism evidence="14">
    <name type="scientific">Bombyx mori</name>
    <name type="common">Silk moth</name>
    <dbReference type="NCBI Taxonomy" id="7091"/>
    <lineage>
        <taxon>Eukaryota</taxon>
        <taxon>Metazoa</taxon>
        <taxon>Ecdysozoa</taxon>
        <taxon>Arthropoda</taxon>
        <taxon>Hexapoda</taxon>
        <taxon>Insecta</taxon>
        <taxon>Pterygota</taxon>
        <taxon>Neoptera</taxon>
        <taxon>Endopterygota</taxon>
        <taxon>Lepidoptera</taxon>
        <taxon>Glossata</taxon>
        <taxon>Ditrysia</taxon>
        <taxon>Bombycoidea</taxon>
        <taxon>Bombycidae</taxon>
        <taxon>Bombycinae</taxon>
        <taxon>Bombyx</taxon>
    </lineage>
</organism>
<evidence type="ECO:0000250" key="1">
    <source>
        <dbReference type="UniProtKB" id="O75173"/>
    </source>
</evidence>
<evidence type="ECO:0000250" key="2">
    <source>
        <dbReference type="UniProtKB" id="Q68SA9"/>
    </source>
</evidence>
<evidence type="ECO:0000255" key="3"/>
<evidence type="ECO:0000255" key="4">
    <source>
        <dbReference type="PROSITE-ProRule" id="PRU00210"/>
    </source>
</evidence>
<evidence type="ECO:0000255" key="5">
    <source>
        <dbReference type="PROSITE-ProRule" id="PRU00276"/>
    </source>
</evidence>
<evidence type="ECO:0000255" key="6">
    <source>
        <dbReference type="PROSITE-ProRule" id="PRU00498"/>
    </source>
</evidence>
<evidence type="ECO:0000269" key="7">
    <source>
    </source>
</evidence>
<evidence type="ECO:0000269" key="8">
    <source>
    </source>
</evidence>
<evidence type="ECO:0000303" key="9">
    <source>
    </source>
</evidence>
<evidence type="ECO:0000303" key="10">
    <source>
    </source>
</evidence>
<evidence type="ECO:0000305" key="11"/>
<evidence type="ECO:0000305" key="12">
    <source>
    </source>
</evidence>
<evidence type="ECO:0000305" key="13">
    <source>
    </source>
</evidence>
<evidence type="ECO:0000312" key="14">
    <source>
        <dbReference type="EMBL" id="BAD69559.2"/>
    </source>
</evidence>
<evidence type="ECO:0000312" key="15">
    <source>
        <dbReference type="EnsemblMetazoa" id="NP_001036981.1"/>
    </source>
</evidence>
<evidence type="ECO:0000312" key="16">
    <source>
        <dbReference type="Proteomes" id="UP000005204"/>
    </source>
</evidence>
<sequence length="1007" mass="113853">MPCCLWAALSLLLAVVGAGAWTPPRQPLLLTPRHRRHAQETHHLRLLGWDLKLKENKAIRSPYYKECQFFTGRVLHEEGSAVTVTECDGQLYGLLQVGGEEFVLQPTRTQEKHVLRRRDVTHSERSAEYNLTGDTVIDLDLDFDEDDDLLPTSHVHPRHSDHSDKEYFHDMHLFRRPASGVKGLWLELAIVADNTMLKFHGRERVKHYILALMNIVSAIFNDPSLGSNITLVINKLFLYEDKDIILKYGNIKKSLEAINKWNYRHLMKLPEGSTGWDATIWLTRSQLGGPSGFAPVGGVCTKTRSAAIDRDEGLTSAFVIAHELAHLLGLTHDGEGNCQSEALRGSVMAPTVLATLHNFAWSSCSKEQFHAKSKKWWCLHERSTDEGVELGGAKELSNYVFTMDEQCRTEFGEGFSVCRSVKVRSACSRLWCAHRAMPHVCRSKRAPPLEGTPCGQNQWCVDRVCEPMPGHSKETKVENKHTPEWGDWEEWSACNADCGYGLRTRTRKCKYRGFVSESACEGAGSQVATCWAGSSCAATRDIRSDLCHRQQSRLIPYLHANESNHCEISCVDYAGGSPTNFGALPDGTPCSYLRPFDVCFQGTCVKGQCNSSDTTCNWCPDGYCNNNTNTYTRLLGNGWTRMTMVPHEARQLSIHIATPIPLHIALRERKRDKPILELSKHSKKFDISSLQDNYLKYDPSVPQNLQIVEMDSNILDLKESFRYEGEAITAGTLLRWNQTDTDIYITSESRLQTDLMIMAIPVNPTLEDAVSVDASVNYSTPTGRTRPLEYRWSIERGPCSASCGGGVRLITAQCHRDQKCPPPRYESCNTHSCEFVWASDDWEECSSTCGSNGVQERQLFCVPSNASMLSRREFIKHSVSPVMCSSSKPPHRQPCNRIPCPVYWREQPWTPCSASCGRGVSRRPLTCPASDELLCGPKPRERRRRCRLRRCPSALRVAVQCPERDHAHYCELFTLEQLHRNCEVPPFRKYCCNACRDADRRQHRRYG</sequence>
<accession>Q5W7F4</accession>
<name>ATS1_BOMMO</name>
<protein>
    <recommendedName>
        <fullName evidence="9 10 14">A disintegrin and metalloproteinase with thrombospondin motifs 1</fullName>
        <shortName evidence="9 10">ADAMTS-1</shortName>
        <ecNumber evidence="11">3.4.24.-</ecNumber>
    </recommendedName>
    <alternativeName>
        <fullName evidence="9 10">BmADAMTS-1</fullName>
    </alternativeName>
</protein>
<keyword id="KW-1015">Disulfide bond</keyword>
<keyword id="KW-0272">Extracellular matrix</keyword>
<keyword id="KW-0325">Glycoprotein</keyword>
<keyword id="KW-0378">Hydrolase</keyword>
<keyword id="KW-0479">Metal-binding</keyword>
<keyword id="KW-0482">Metalloprotease</keyword>
<keyword id="KW-0645">Protease</keyword>
<keyword id="KW-1185">Reference proteome</keyword>
<keyword id="KW-0677">Repeat</keyword>
<keyword id="KW-0964">Secreted</keyword>
<keyword id="KW-0732">Signal</keyword>
<keyword id="KW-0862">Zinc</keyword>